<protein>
    <recommendedName>
        <fullName>Uncharacterized N-acetyltransferase YnaD</fullName>
        <ecNumber>2.3.1.-</ecNumber>
    </recommendedName>
</protein>
<sequence>MHITTKRLLIREFEFKDWQAVYEYTSDSNVMKYIPEGVFTEEDAKAFVNKNKGDNAEKFPVILRDEDCLIGHIVFYKYFGEHTYEIGWVFNPNYQNKGYASEAAQAILEYGFKEMNLHRIIATCQPENIPSYRVMKKIGMRREGFFKKCIPKGNEWWDEYYYAILEEEWN</sequence>
<dbReference type="EC" id="2.3.1.-"/>
<dbReference type="EMBL" id="U66480">
    <property type="protein sequence ID" value="AAB41084.1"/>
    <property type="molecule type" value="Genomic_DNA"/>
</dbReference>
<dbReference type="EMBL" id="AL009126">
    <property type="protein sequence ID" value="CAB13636.1"/>
    <property type="molecule type" value="Genomic_DNA"/>
</dbReference>
<dbReference type="PIR" id="D69887">
    <property type="entry name" value="D69887"/>
</dbReference>
<dbReference type="RefSeq" id="NP_389634.1">
    <property type="nucleotide sequence ID" value="NC_000964.3"/>
</dbReference>
<dbReference type="RefSeq" id="WP_003245754.1">
    <property type="nucleotide sequence ID" value="NZ_OZ025638.1"/>
</dbReference>
<dbReference type="SMR" id="P94482"/>
<dbReference type="FunCoup" id="P94482">
    <property type="interactions" value="16"/>
</dbReference>
<dbReference type="STRING" id="224308.BSU17520"/>
<dbReference type="PaxDb" id="224308-BSU17520"/>
<dbReference type="DNASU" id="936242"/>
<dbReference type="EnsemblBacteria" id="CAB13636">
    <property type="protein sequence ID" value="CAB13636"/>
    <property type="gene ID" value="BSU_17520"/>
</dbReference>
<dbReference type="GeneID" id="936242"/>
<dbReference type="KEGG" id="bsu:BSU17520"/>
<dbReference type="PATRIC" id="fig|224308.179.peg.1900"/>
<dbReference type="eggNOG" id="COG1670">
    <property type="taxonomic scope" value="Bacteria"/>
</dbReference>
<dbReference type="InParanoid" id="P94482"/>
<dbReference type="OrthoDB" id="9785602at2"/>
<dbReference type="PhylomeDB" id="P94482"/>
<dbReference type="BioCyc" id="BSUB:BSU17520-MONOMER"/>
<dbReference type="Proteomes" id="UP000001570">
    <property type="component" value="Chromosome"/>
</dbReference>
<dbReference type="GO" id="GO:0016747">
    <property type="term" value="F:acyltransferase activity, transferring groups other than amino-acyl groups"/>
    <property type="evidence" value="ECO:0007669"/>
    <property type="project" value="InterPro"/>
</dbReference>
<dbReference type="CDD" id="cd04301">
    <property type="entry name" value="NAT_SF"/>
    <property type="match status" value="1"/>
</dbReference>
<dbReference type="Gene3D" id="3.40.630.30">
    <property type="match status" value="1"/>
</dbReference>
<dbReference type="InterPro" id="IPR016181">
    <property type="entry name" value="Acyl_CoA_acyltransferase"/>
</dbReference>
<dbReference type="InterPro" id="IPR000182">
    <property type="entry name" value="GNAT_dom"/>
</dbReference>
<dbReference type="InterPro" id="IPR051531">
    <property type="entry name" value="N-acetyltransferase"/>
</dbReference>
<dbReference type="PANTHER" id="PTHR43792">
    <property type="entry name" value="GNAT FAMILY, PUTATIVE (AFU_ORTHOLOGUE AFUA_3G00765)-RELATED-RELATED"/>
    <property type="match status" value="1"/>
</dbReference>
<dbReference type="PANTHER" id="PTHR43792:SF5">
    <property type="entry name" value="RIBOSOMAL-PROTEIN-SERINE ACETYLTRANSFERASE"/>
    <property type="match status" value="1"/>
</dbReference>
<dbReference type="Pfam" id="PF13302">
    <property type="entry name" value="Acetyltransf_3"/>
    <property type="match status" value="1"/>
</dbReference>
<dbReference type="SUPFAM" id="SSF55729">
    <property type="entry name" value="Acyl-CoA N-acyltransferases (Nat)"/>
    <property type="match status" value="1"/>
</dbReference>
<dbReference type="PROSITE" id="PS51186">
    <property type="entry name" value="GNAT"/>
    <property type="match status" value="1"/>
</dbReference>
<keyword id="KW-0012">Acyltransferase</keyword>
<keyword id="KW-1185">Reference proteome</keyword>
<keyword id="KW-0808">Transferase</keyword>
<evidence type="ECO:0000255" key="1">
    <source>
        <dbReference type="PROSITE-ProRule" id="PRU00532"/>
    </source>
</evidence>
<evidence type="ECO:0000305" key="2"/>
<organism>
    <name type="scientific">Bacillus subtilis (strain 168)</name>
    <dbReference type="NCBI Taxonomy" id="224308"/>
    <lineage>
        <taxon>Bacteria</taxon>
        <taxon>Bacillati</taxon>
        <taxon>Bacillota</taxon>
        <taxon>Bacilli</taxon>
        <taxon>Bacillales</taxon>
        <taxon>Bacillaceae</taxon>
        <taxon>Bacillus</taxon>
    </lineage>
</organism>
<proteinExistence type="inferred from homology"/>
<name>YNAD_BACSU</name>
<accession>P94482</accession>
<accession>Q796H8</accession>
<reference key="1">
    <citation type="submission" date="1997-02" db="EMBL/GenBank/DDBJ databases">
        <title>Sequencing of a 26 kb region of the Bacillus subtilis genome downstream of spoVJ.</title>
        <authorList>
            <person name="Borchert S."/>
            <person name="Klein C."/>
            <person name="Piksa B."/>
            <person name="Hammelmann M."/>
            <person name="Entian K.-D."/>
        </authorList>
    </citation>
    <scope>NUCLEOTIDE SEQUENCE [GENOMIC DNA]</scope>
</reference>
<reference key="2">
    <citation type="journal article" date="1997" name="Nature">
        <title>The complete genome sequence of the Gram-positive bacterium Bacillus subtilis.</title>
        <authorList>
            <person name="Kunst F."/>
            <person name="Ogasawara N."/>
            <person name="Moszer I."/>
            <person name="Albertini A.M."/>
            <person name="Alloni G."/>
            <person name="Azevedo V."/>
            <person name="Bertero M.G."/>
            <person name="Bessieres P."/>
            <person name="Bolotin A."/>
            <person name="Borchert S."/>
            <person name="Borriss R."/>
            <person name="Boursier L."/>
            <person name="Brans A."/>
            <person name="Braun M."/>
            <person name="Brignell S.C."/>
            <person name="Bron S."/>
            <person name="Brouillet S."/>
            <person name="Bruschi C.V."/>
            <person name="Caldwell B."/>
            <person name="Capuano V."/>
            <person name="Carter N.M."/>
            <person name="Choi S.-K."/>
            <person name="Codani J.-J."/>
            <person name="Connerton I.F."/>
            <person name="Cummings N.J."/>
            <person name="Daniel R.A."/>
            <person name="Denizot F."/>
            <person name="Devine K.M."/>
            <person name="Duesterhoeft A."/>
            <person name="Ehrlich S.D."/>
            <person name="Emmerson P.T."/>
            <person name="Entian K.-D."/>
            <person name="Errington J."/>
            <person name="Fabret C."/>
            <person name="Ferrari E."/>
            <person name="Foulger D."/>
            <person name="Fritz C."/>
            <person name="Fujita M."/>
            <person name="Fujita Y."/>
            <person name="Fuma S."/>
            <person name="Galizzi A."/>
            <person name="Galleron N."/>
            <person name="Ghim S.-Y."/>
            <person name="Glaser P."/>
            <person name="Goffeau A."/>
            <person name="Golightly E.J."/>
            <person name="Grandi G."/>
            <person name="Guiseppi G."/>
            <person name="Guy B.J."/>
            <person name="Haga K."/>
            <person name="Haiech J."/>
            <person name="Harwood C.R."/>
            <person name="Henaut A."/>
            <person name="Hilbert H."/>
            <person name="Holsappel S."/>
            <person name="Hosono S."/>
            <person name="Hullo M.-F."/>
            <person name="Itaya M."/>
            <person name="Jones L.-M."/>
            <person name="Joris B."/>
            <person name="Karamata D."/>
            <person name="Kasahara Y."/>
            <person name="Klaerr-Blanchard M."/>
            <person name="Klein C."/>
            <person name="Kobayashi Y."/>
            <person name="Koetter P."/>
            <person name="Koningstein G."/>
            <person name="Krogh S."/>
            <person name="Kumano M."/>
            <person name="Kurita K."/>
            <person name="Lapidus A."/>
            <person name="Lardinois S."/>
            <person name="Lauber J."/>
            <person name="Lazarevic V."/>
            <person name="Lee S.-M."/>
            <person name="Levine A."/>
            <person name="Liu H."/>
            <person name="Masuda S."/>
            <person name="Mauel C."/>
            <person name="Medigue C."/>
            <person name="Medina N."/>
            <person name="Mellado R.P."/>
            <person name="Mizuno M."/>
            <person name="Moestl D."/>
            <person name="Nakai S."/>
            <person name="Noback M."/>
            <person name="Noone D."/>
            <person name="O'Reilly M."/>
            <person name="Ogawa K."/>
            <person name="Ogiwara A."/>
            <person name="Oudega B."/>
            <person name="Park S.-H."/>
            <person name="Parro V."/>
            <person name="Pohl T.M."/>
            <person name="Portetelle D."/>
            <person name="Porwollik S."/>
            <person name="Prescott A.M."/>
            <person name="Presecan E."/>
            <person name="Pujic P."/>
            <person name="Purnelle B."/>
            <person name="Rapoport G."/>
            <person name="Rey M."/>
            <person name="Reynolds S."/>
            <person name="Rieger M."/>
            <person name="Rivolta C."/>
            <person name="Rocha E."/>
            <person name="Roche B."/>
            <person name="Rose M."/>
            <person name="Sadaie Y."/>
            <person name="Sato T."/>
            <person name="Scanlan E."/>
            <person name="Schleich S."/>
            <person name="Schroeter R."/>
            <person name="Scoffone F."/>
            <person name="Sekiguchi J."/>
            <person name="Sekowska A."/>
            <person name="Seror S.J."/>
            <person name="Serror P."/>
            <person name="Shin B.-S."/>
            <person name="Soldo B."/>
            <person name="Sorokin A."/>
            <person name="Tacconi E."/>
            <person name="Takagi T."/>
            <person name="Takahashi H."/>
            <person name="Takemaru K."/>
            <person name="Takeuchi M."/>
            <person name="Tamakoshi A."/>
            <person name="Tanaka T."/>
            <person name="Terpstra P."/>
            <person name="Tognoni A."/>
            <person name="Tosato V."/>
            <person name="Uchiyama S."/>
            <person name="Vandenbol M."/>
            <person name="Vannier F."/>
            <person name="Vassarotti A."/>
            <person name="Viari A."/>
            <person name="Wambutt R."/>
            <person name="Wedler E."/>
            <person name="Wedler H."/>
            <person name="Weitzenegger T."/>
            <person name="Winters P."/>
            <person name="Wipat A."/>
            <person name="Yamamoto H."/>
            <person name="Yamane K."/>
            <person name="Yasumoto K."/>
            <person name="Yata K."/>
            <person name="Yoshida K."/>
            <person name="Yoshikawa H.-F."/>
            <person name="Zumstein E."/>
            <person name="Yoshikawa H."/>
            <person name="Danchin A."/>
        </authorList>
    </citation>
    <scope>NUCLEOTIDE SEQUENCE [LARGE SCALE GENOMIC DNA]</scope>
    <source>
        <strain>168</strain>
    </source>
</reference>
<feature type="chain" id="PRO_0000360499" description="Uncharacterized N-acetyltransferase YnaD">
    <location>
        <begin position="1"/>
        <end position="170"/>
    </location>
</feature>
<feature type="domain" description="N-acetyltransferase" evidence="1">
    <location>
        <begin position="8"/>
        <end position="167"/>
    </location>
</feature>
<comment type="similarity">
    <text evidence="2">Belongs to the acetyltransferase family.</text>
</comment>
<gene>
    <name type="primary">ynaD</name>
    <name type="ordered locus">BSU17520</name>
</gene>